<reference key="1">
    <citation type="journal article" date="2004" name="Mol. Plant Microbe Interact.">
        <title>The genome sequence of the Gram-positive sugarcane pathogen Leifsonia xyli subsp. xyli.</title>
        <authorList>
            <person name="Monteiro-Vitorello C.B."/>
            <person name="Camargo L.E.A."/>
            <person name="Van Sluys M.A."/>
            <person name="Kitajima J.P."/>
            <person name="Truffi D."/>
            <person name="do Amaral A.M."/>
            <person name="Harakava R."/>
            <person name="de Oliveira J.C.F."/>
            <person name="Wood D."/>
            <person name="de Oliveira M.C."/>
            <person name="Miyaki C.Y."/>
            <person name="Takita M.A."/>
            <person name="da Silva A.C.R."/>
            <person name="Furlan L.R."/>
            <person name="Carraro D.M."/>
            <person name="Camarotte G."/>
            <person name="Almeida N.F. Jr."/>
            <person name="Carrer H."/>
            <person name="Coutinho L.L."/>
            <person name="El-Dorry H.A."/>
            <person name="Ferro M.I.T."/>
            <person name="Gagliardi P.R."/>
            <person name="Giglioti E."/>
            <person name="Goldman M.H.S."/>
            <person name="Goldman G.H."/>
            <person name="Kimura E.T."/>
            <person name="Ferro E.S."/>
            <person name="Kuramae E.E."/>
            <person name="Lemos E.G.M."/>
            <person name="Lemos M.V.F."/>
            <person name="Mauro S.M.Z."/>
            <person name="Machado M.A."/>
            <person name="Marino C.L."/>
            <person name="Menck C.F."/>
            <person name="Nunes L.R."/>
            <person name="Oliveira R.C."/>
            <person name="Pereira G.G."/>
            <person name="Siqueira W."/>
            <person name="de Souza A.A."/>
            <person name="Tsai S.M."/>
            <person name="Zanca A.S."/>
            <person name="Simpson A.J.G."/>
            <person name="Brumbley S.M."/>
            <person name="Setubal J.C."/>
        </authorList>
    </citation>
    <scope>NUCLEOTIDE SEQUENCE [LARGE SCALE GENOMIC DNA]</scope>
    <source>
        <strain>CTCB07</strain>
    </source>
</reference>
<comment type="function">
    <text evidence="1">Catalyzes the conversion of uracil and 5-phospho-alpha-D-ribose 1-diphosphate (PRPP) to UMP and diphosphate.</text>
</comment>
<comment type="catalytic activity">
    <reaction evidence="1">
        <text>UMP + diphosphate = 5-phospho-alpha-D-ribose 1-diphosphate + uracil</text>
        <dbReference type="Rhea" id="RHEA:13017"/>
        <dbReference type="ChEBI" id="CHEBI:17568"/>
        <dbReference type="ChEBI" id="CHEBI:33019"/>
        <dbReference type="ChEBI" id="CHEBI:57865"/>
        <dbReference type="ChEBI" id="CHEBI:58017"/>
        <dbReference type="EC" id="2.4.2.9"/>
    </reaction>
</comment>
<comment type="cofactor">
    <cofactor evidence="1">
        <name>Mg(2+)</name>
        <dbReference type="ChEBI" id="CHEBI:18420"/>
    </cofactor>
    <text evidence="1">Binds 1 Mg(2+) ion per subunit. The magnesium is bound as Mg-PRPP.</text>
</comment>
<comment type="activity regulation">
    <text evidence="1">Allosterically activated by GTP.</text>
</comment>
<comment type="pathway">
    <text evidence="1">Pyrimidine metabolism; UMP biosynthesis via salvage pathway; UMP from uracil: step 1/1.</text>
</comment>
<comment type="similarity">
    <text evidence="1">Belongs to the UPRTase family.</text>
</comment>
<proteinExistence type="inferred from homology"/>
<feature type="chain" id="PRO_0000120843" description="Uracil phosphoribosyltransferase">
    <location>
        <begin position="1"/>
        <end position="210"/>
    </location>
</feature>
<feature type="binding site" evidence="1">
    <location>
        <position position="78"/>
    </location>
    <ligand>
        <name>5-phospho-alpha-D-ribose 1-diphosphate</name>
        <dbReference type="ChEBI" id="CHEBI:58017"/>
    </ligand>
</feature>
<feature type="binding site" evidence="1">
    <location>
        <position position="103"/>
    </location>
    <ligand>
        <name>5-phospho-alpha-D-ribose 1-diphosphate</name>
        <dbReference type="ChEBI" id="CHEBI:58017"/>
    </ligand>
</feature>
<feature type="binding site" evidence="1">
    <location>
        <begin position="130"/>
        <end position="138"/>
    </location>
    <ligand>
        <name>5-phospho-alpha-D-ribose 1-diphosphate</name>
        <dbReference type="ChEBI" id="CHEBI:58017"/>
    </ligand>
</feature>
<feature type="binding site" evidence="1">
    <location>
        <position position="195"/>
    </location>
    <ligand>
        <name>uracil</name>
        <dbReference type="ChEBI" id="CHEBI:17568"/>
    </ligand>
</feature>
<feature type="binding site" evidence="1">
    <location>
        <begin position="200"/>
        <end position="202"/>
    </location>
    <ligand>
        <name>uracil</name>
        <dbReference type="ChEBI" id="CHEBI:17568"/>
    </ligand>
</feature>
<feature type="binding site" evidence="1">
    <location>
        <position position="201"/>
    </location>
    <ligand>
        <name>5-phospho-alpha-D-ribose 1-diphosphate</name>
        <dbReference type="ChEBI" id="CHEBI:58017"/>
    </ligand>
</feature>
<name>UPP_LEIXX</name>
<accession>Q6AHB4</accession>
<dbReference type="EC" id="2.4.2.9" evidence="1"/>
<dbReference type="EMBL" id="AE016822">
    <property type="protein sequence ID" value="AAT88231.1"/>
    <property type="molecule type" value="Genomic_DNA"/>
</dbReference>
<dbReference type="RefSeq" id="WP_011185236.1">
    <property type="nucleotide sequence ID" value="NC_006087.1"/>
</dbReference>
<dbReference type="SMR" id="Q6AHB4"/>
<dbReference type="STRING" id="281090.Lxx01650"/>
<dbReference type="KEGG" id="lxx:Lxx01650"/>
<dbReference type="eggNOG" id="COG0035">
    <property type="taxonomic scope" value="Bacteria"/>
</dbReference>
<dbReference type="HOGENOM" id="CLU_067096_2_3_11"/>
<dbReference type="UniPathway" id="UPA00574">
    <property type="reaction ID" value="UER00636"/>
</dbReference>
<dbReference type="Proteomes" id="UP000001306">
    <property type="component" value="Chromosome"/>
</dbReference>
<dbReference type="GO" id="GO:0005525">
    <property type="term" value="F:GTP binding"/>
    <property type="evidence" value="ECO:0007669"/>
    <property type="project" value="UniProtKB-KW"/>
</dbReference>
<dbReference type="GO" id="GO:0000287">
    <property type="term" value="F:magnesium ion binding"/>
    <property type="evidence" value="ECO:0007669"/>
    <property type="project" value="UniProtKB-UniRule"/>
</dbReference>
<dbReference type="GO" id="GO:0004845">
    <property type="term" value="F:uracil phosphoribosyltransferase activity"/>
    <property type="evidence" value="ECO:0007669"/>
    <property type="project" value="UniProtKB-UniRule"/>
</dbReference>
<dbReference type="GO" id="GO:0044206">
    <property type="term" value="P:UMP salvage"/>
    <property type="evidence" value="ECO:0007669"/>
    <property type="project" value="UniProtKB-UniRule"/>
</dbReference>
<dbReference type="GO" id="GO:0006223">
    <property type="term" value="P:uracil salvage"/>
    <property type="evidence" value="ECO:0007669"/>
    <property type="project" value="InterPro"/>
</dbReference>
<dbReference type="CDD" id="cd06223">
    <property type="entry name" value="PRTases_typeI"/>
    <property type="match status" value="1"/>
</dbReference>
<dbReference type="FunFam" id="3.40.50.2020:FF:000003">
    <property type="entry name" value="Uracil phosphoribosyltransferase"/>
    <property type="match status" value="1"/>
</dbReference>
<dbReference type="Gene3D" id="3.40.50.2020">
    <property type="match status" value="1"/>
</dbReference>
<dbReference type="HAMAP" id="MF_01218_B">
    <property type="entry name" value="Upp_B"/>
    <property type="match status" value="1"/>
</dbReference>
<dbReference type="InterPro" id="IPR000836">
    <property type="entry name" value="PRibTrfase_dom"/>
</dbReference>
<dbReference type="InterPro" id="IPR029057">
    <property type="entry name" value="PRTase-like"/>
</dbReference>
<dbReference type="InterPro" id="IPR034332">
    <property type="entry name" value="Upp_B"/>
</dbReference>
<dbReference type="InterPro" id="IPR050054">
    <property type="entry name" value="UPRTase/APRTase"/>
</dbReference>
<dbReference type="InterPro" id="IPR005765">
    <property type="entry name" value="Ura_phspho_trans"/>
</dbReference>
<dbReference type="NCBIfam" id="NF001097">
    <property type="entry name" value="PRK00129.1"/>
    <property type="match status" value="1"/>
</dbReference>
<dbReference type="NCBIfam" id="TIGR01091">
    <property type="entry name" value="upp"/>
    <property type="match status" value="1"/>
</dbReference>
<dbReference type="PANTHER" id="PTHR32315">
    <property type="entry name" value="ADENINE PHOSPHORIBOSYLTRANSFERASE"/>
    <property type="match status" value="1"/>
</dbReference>
<dbReference type="PANTHER" id="PTHR32315:SF4">
    <property type="entry name" value="URACIL PHOSPHORIBOSYLTRANSFERASE, CHLOROPLASTIC"/>
    <property type="match status" value="1"/>
</dbReference>
<dbReference type="Pfam" id="PF14681">
    <property type="entry name" value="UPRTase"/>
    <property type="match status" value="1"/>
</dbReference>
<dbReference type="SUPFAM" id="SSF53271">
    <property type="entry name" value="PRTase-like"/>
    <property type="match status" value="1"/>
</dbReference>
<protein>
    <recommendedName>
        <fullName evidence="1">Uracil phosphoribosyltransferase</fullName>
        <ecNumber evidence="1">2.4.2.9</ecNumber>
    </recommendedName>
    <alternativeName>
        <fullName evidence="1">UMP pyrophosphorylase</fullName>
    </alternativeName>
    <alternativeName>
        <fullName evidence="1">UPRTase</fullName>
    </alternativeName>
</protein>
<gene>
    <name evidence="1" type="primary">upp</name>
    <name type="ordered locus">Lxx01650</name>
</gene>
<organism>
    <name type="scientific">Leifsonia xyli subsp. xyli (strain CTCB07)</name>
    <dbReference type="NCBI Taxonomy" id="281090"/>
    <lineage>
        <taxon>Bacteria</taxon>
        <taxon>Bacillati</taxon>
        <taxon>Actinomycetota</taxon>
        <taxon>Actinomycetes</taxon>
        <taxon>Micrococcales</taxon>
        <taxon>Microbacteriaceae</taxon>
        <taxon>Leifsonia</taxon>
    </lineage>
</organism>
<evidence type="ECO:0000255" key="1">
    <source>
        <dbReference type="HAMAP-Rule" id="MF_01218"/>
    </source>
</evidence>
<keyword id="KW-0021">Allosteric enzyme</keyword>
<keyword id="KW-0328">Glycosyltransferase</keyword>
<keyword id="KW-0342">GTP-binding</keyword>
<keyword id="KW-0460">Magnesium</keyword>
<keyword id="KW-0547">Nucleotide-binding</keyword>
<keyword id="KW-1185">Reference proteome</keyword>
<keyword id="KW-0808">Transferase</keyword>
<sequence length="210" mass="22655">MRVHVADHPLITHKLSVLRNKETPAPTFRALTEELVTLLAYEATRAVRVEPVEIETPVTSTRGVTISEPRPLVVPILRAGLGMLEGMVSLMPTAEVGFLGMARNEETFEPTTYAERLPMDLSERQCFVLDPMLATGGSLGAAIDFLFKRNAVDVTAICILAAPEGLAALEKATEGRDVTIVLGALDERLNENGYIVPGLGDAGDRLYGTV</sequence>